<evidence type="ECO:0000255" key="1">
    <source>
        <dbReference type="HAMAP-Rule" id="MF_00051"/>
    </source>
</evidence>
<protein>
    <recommendedName>
        <fullName evidence="1">Serine hydroxymethyltransferase</fullName>
        <shortName evidence="1">SHMT</shortName>
        <shortName evidence="1">Serine methylase</shortName>
        <ecNumber evidence="1">2.1.2.1</ecNumber>
    </recommendedName>
</protein>
<name>GLYA_LEUCK</name>
<organism>
    <name type="scientific">Leuconostoc citreum (strain KM20)</name>
    <dbReference type="NCBI Taxonomy" id="349519"/>
    <lineage>
        <taxon>Bacteria</taxon>
        <taxon>Bacillati</taxon>
        <taxon>Bacillota</taxon>
        <taxon>Bacilli</taxon>
        <taxon>Lactobacillales</taxon>
        <taxon>Lactobacillaceae</taxon>
        <taxon>Leuconostoc</taxon>
    </lineage>
</organism>
<sequence>MSFKELDPEVWSAIQQEGARQNRTIELIASENFASKGVRAAQGSVLTNKYAEGYPYKRYYGGTEYVDVVEQLAIDRLKALFGAEYANVQPHSGSQANAAAYMAFLQPGDKILGMDLDAGGHLTHGAKVSFSGKMYQSYTYGLDAESEQLDYEAIAKQAREVQPQMIVAGASAYSRIIDFNKFREIADEVGAYLMVDMAHIAGLVAAGLHPNPVGIADVVTSTTHKTLRGPRGGVILSQEKYAKKINSAIFPGSQGGPLEHVIAGKAIAFGEALQPEFKAYAAQIIKNAQAMAEVFTATEDIRVVAGGTDNHLFNLDLTKTGLNGKQTQELLDSVSITTNKEALPNETLSPFITSGIRIGTPAITTRGFNEADARHVAELIVTAIHHYDDAKVLKDVKKEAEILAMTHLFE</sequence>
<dbReference type="EC" id="2.1.2.1" evidence="1"/>
<dbReference type="EMBL" id="DQ489736">
    <property type="protein sequence ID" value="ACA82557.1"/>
    <property type="molecule type" value="Genomic_DNA"/>
</dbReference>
<dbReference type="RefSeq" id="WP_004906989.1">
    <property type="nucleotide sequence ID" value="NC_010471.1"/>
</dbReference>
<dbReference type="SMR" id="B1MYF5"/>
<dbReference type="STRING" id="349519.LCK_00725"/>
<dbReference type="GeneID" id="61102348"/>
<dbReference type="KEGG" id="lci:LCK_00725"/>
<dbReference type="eggNOG" id="COG0112">
    <property type="taxonomic scope" value="Bacteria"/>
</dbReference>
<dbReference type="HOGENOM" id="CLU_022477_2_1_9"/>
<dbReference type="OrthoDB" id="9803846at2"/>
<dbReference type="UniPathway" id="UPA00193"/>
<dbReference type="UniPathway" id="UPA00288">
    <property type="reaction ID" value="UER01023"/>
</dbReference>
<dbReference type="Proteomes" id="UP000002166">
    <property type="component" value="Chromosome"/>
</dbReference>
<dbReference type="GO" id="GO:0005829">
    <property type="term" value="C:cytosol"/>
    <property type="evidence" value="ECO:0007669"/>
    <property type="project" value="TreeGrafter"/>
</dbReference>
<dbReference type="GO" id="GO:0004372">
    <property type="term" value="F:glycine hydroxymethyltransferase activity"/>
    <property type="evidence" value="ECO:0007669"/>
    <property type="project" value="UniProtKB-UniRule"/>
</dbReference>
<dbReference type="GO" id="GO:0030170">
    <property type="term" value="F:pyridoxal phosphate binding"/>
    <property type="evidence" value="ECO:0007669"/>
    <property type="project" value="UniProtKB-UniRule"/>
</dbReference>
<dbReference type="GO" id="GO:0019264">
    <property type="term" value="P:glycine biosynthetic process from serine"/>
    <property type="evidence" value="ECO:0007669"/>
    <property type="project" value="UniProtKB-UniRule"/>
</dbReference>
<dbReference type="GO" id="GO:0035999">
    <property type="term" value="P:tetrahydrofolate interconversion"/>
    <property type="evidence" value="ECO:0007669"/>
    <property type="project" value="UniProtKB-UniRule"/>
</dbReference>
<dbReference type="CDD" id="cd00378">
    <property type="entry name" value="SHMT"/>
    <property type="match status" value="1"/>
</dbReference>
<dbReference type="FunFam" id="3.40.640.10:FF:000001">
    <property type="entry name" value="Serine hydroxymethyltransferase"/>
    <property type="match status" value="1"/>
</dbReference>
<dbReference type="Gene3D" id="3.90.1150.10">
    <property type="entry name" value="Aspartate Aminotransferase, domain 1"/>
    <property type="match status" value="1"/>
</dbReference>
<dbReference type="Gene3D" id="3.40.640.10">
    <property type="entry name" value="Type I PLP-dependent aspartate aminotransferase-like (Major domain)"/>
    <property type="match status" value="1"/>
</dbReference>
<dbReference type="HAMAP" id="MF_00051">
    <property type="entry name" value="SHMT"/>
    <property type="match status" value="1"/>
</dbReference>
<dbReference type="InterPro" id="IPR015424">
    <property type="entry name" value="PyrdxlP-dep_Trfase"/>
</dbReference>
<dbReference type="InterPro" id="IPR015421">
    <property type="entry name" value="PyrdxlP-dep_Trfase_major"/>
</dbReference>
<dbReference type="InterPro" id="IPR015422">
    <property type="entry name" value="PyrdxlP-dep_Trfase_small"/>
</dbReference>
<dbReference type="InterPro" id="IPR001085">
    <property type="entry name" value="Ser_HO-MeTrfase"/>
</dbReference>
<dbReference type="InterPro" id="IPR049943">
    <property type="entry name" value="Ser_HO-MeTrfase-like"/>
</dbReference>
<dbReference type="InterPro" id="IPR019798">
    <property type="entry name" value="Ser_HO-MeTrfase_PLP_BS"/>
</dbReference>
<dbReference type="InterPro" id="IPR039429">
    <property type="entry name" value="SHMT-like_dom"/>
</dbReference>
<dbReference type="NCBIfam" id="NF000586">
    <property type="entry name" value="PRK00011.1"/>
    <property type="match status" value="1"/>
</dbReference>
<dbReference type="PANTHER" id="PTHR11680">
    <property type="entry name" value="SERINE HYDROXYMETHYLTRANSFERASE"/>
    <property type="match status" value="1"/>
</dbReference>
<dbReference type="PANTHER" id="PTHR11680:SF35">
    <property type="entry name" value="SERINE HYDROXYMETHYLTRANSFERASE 1"/>
    <property type="match status" value="1"/>
</dbReference>
<dbReference type="Pfam" id="PF00464">
    <property type="entry name" value="SHMT"/>
    <property type="match status" value="1"/>
</dbReference>
<dbReference type="PIRSF" id="PIRSF000412">
    <property type="entry name" value="SHMT"/>
    <property type="match status" value="1"/>
</dbReference>
<dbReference type="SUPFAM" id="SSF53383">
    <property type="entry name" value="PLP-dependent transferases"/>
    <property type="match status" value="1"/>
</dbReference>
<dbReference type="PROSITE" id="PS00096">
    <property type="entry name" value="SHMT"/>
    <property type="match status" value="1"/>
</dbReference>
<keyword id="KW-0028">Amino-acid biosynthesis</keyword>
<keyword id="KW-0963">Cytoplasm</keyword>
<keyword id="KW-0554">One-carbon metabolism</keyword>
<keyword id="KW-0663">Pyridoxal phosphate</keyword>
<keyword id="KW-1185">Reference proteome</keyword>
<keyword id="KW-0808">Transferase</keyword>
<reference key="1">
    <citation type="journal article" date="2008" name="J. Bacteriol.">
        <title>Complete genome sequence of Leuconostoc citreum KM20.</title>
        <authorList>
            <person name="Kim J.F."/>
            <person name="Jeong H."/>
            <person name="Lee J.-S."/>
            <person name="Choi S.-H."/>
            <person name="Ha M."/>
            <person name="Hur C.-G."/>
            <person name="Kim J.-S."/>
            <person name="Lee S."/>
            <person name="Park H.-S."/>
            <person name="Park Y.-H."/>
            <person name="Oh T.K."/>
        </authorList>
    </citation>
    <scope>NUCLEOTIDE SEQUENCE [LARGE SCALE GENOMIC DNA]</scope>
    <source>
        <strain>KM20</strain>
    </source>
</reference>
<feature type="chain" id="PRO_1000091556" description="Serine hydroxymethyltransferase">
    <location>
        <begin position="1"/>
        <end position="410"/>
    </location>
</feature>
<feature type="binding site" evidence="1">
    <location>
        <position position="116"/>
    </location>
    <ligand>
        <name>(6S)-5,6,7,8-tetrahydrofolate</name>
        <dbReference type="ChEBI" id="CHEBI:57453"/>
    </ligand>
</feature>
<feature type="binding site" evidence="1">
    <location>
        <begin position="120"/>
        <end position="122"/>
    </location>
    <ligand>
        <name>(6S)-5,6,7,8-tetrahydrofolate</name>
        <dbReference type="ChEBI" id="CHEBI:57453"/>
    </ligand>
</feature>
<feature type="binding site" evidence="1">
    <location>
        <begin position="349"/>
        <end position="351"/>
    </location>
    <ligand>
        <name>(6S)-5,6,7,8-tetrahydrofolate</name>
        <dbReference type="ChEBI" id="CHEBI:57453"/>
    </ligand>
</feature>
<feature type="site" description="Plays an important role in substrate specificity" evidence="1">
    <location>
        <position position="224"/>
    </location>
</feature>
<feature type="modified residue" description="N6-(pyridoxal phosphate)lysine" evidence="1">
    <location>
        <position position="225"/>
    </location>
</feature>
<comment type="function">
    <text evidence="1">Catalyzes the reversible interconversion of serine and glycine with tetrahydrofolate (THF) serving as the one-carbon carrier. This reaction serves as the major source of one-carbon groups required for the biosynthesis of purines, thymidylate, methionine, and other important biomolecules. Also exhibits THF-independent aldolase activity toward beta-hydroxyamino acids, producing glycine and aldehydes, via a retro-aldol mechanism.</text>
</comment>
<comment type="catalytic activity">
    <reaction evidence="1">
        <text>(6R)-5,10-methylene-5,6,7,8-tetrahydrofolate + glycine + H2O = (6S)-5,6,7,8-tetrahydrofolate + L-serine</text>
        <dbReference type="Rhea" id="RHEA:15481"/>
        <dbReference type="ChEBI" id="CHEBI:15377"/>
        <dbReference type="ChEBI" id="CHEBI:15636"/>
        <dbReference type="ChEBI" id="CHEBI:33384"/>
        <dbReference type="ChEBI" id="CHEBI:57305"/>
        <dbReference type="ChEBI" id="CHEBI:57453"/>
        <dbReference type="EC" id="2.1.2.1"/>
    </reaction>
</comment>
<comment type="cofactor">
    <cofactor evidence="1">
        <name>pyridoxal 5'-phosphate</name>
        <dbReference type="ChEBI" id="CHEBI:597326"/>
    </cofactor>
</comment>
<comment type="pathway">
    <text evidence="1">One-carbon metabolism; tetrahydrofolate interconversion.</text>
</comment>
<comment type="pathway">
    <text evidence="1">Amino-acid biosynthesis; glycine biosynthesis; glycine from L-serine: step 1/1.</text>
</comment>
<comment type="subunit">
    <text evidence="1">Homodimer.</text>
</comment>
<comment type="subcellular location">
    <subcellularLocation>
        <location evidence="1">Cytoplasm</location>
    </subcellularLocation>
</comment>
<comment type="similarity">
    <text evidence="1">Belongs to the SHMT family.</text>
</comment>
<proteinExistence type="inferred from homology"/>
<gene>
    <name evidence="1" type="primary">glyA</name>
    <name type="ordered locus">LCK_00725</name>
</gene>
<accession>B1MYF5</accession>